<name>RPOB_CAMJ8</name>
<keyword id="KW-0240">DNA-directed RNA polymerase</keyword>
<keyword id="KW-0548">Nucleotidyltransferase</keyword>
<keyword id="KW-0804">Transcription</keyword>
<keyword id="KW-0808">Transferase</keyword>
<accession>A8FKR3</accession>
<gene>
    <name evidence="1" type="primary">rpoB</name>
    <name type="ordered locus">C8J_0451</name>
</gene>
<evidence type="ECO:0000255" key="1">
    <source>
        <dbReference type="HAMAP-Rule" id="MF_01321"/>
    </source>
</evidence>
<proteinExistence type="inferred from homology"/>
<dbReference type="EC" id="2.7.7.6" evidence="1"/>
<dbReference type="EMBL" id="CP000814">
    <property type="protein sequence ID" value="ABV52050.1"/>
    <property type="molecule type" value="Genomic_DNA"/>
</dbReference>
<dbReference type="SMR" id="A8FKR3"/>
<dbReference type="KEGG" id="cju:C8J_0451"/>
<dbReference type="HOGENOM" id="CLU_000524_4_0_7"/>
<dbReference type="GO" id="GO:0000428">
    <property type="term" value="C:DNA-directed RNA polymerase complex"/>
    <property type="evidence" value="ECO:0007669"/>
    <property type="project" value="UniProtKB-KW"/>
</dbReference>
<dbReference type="GO" id="GO:0003677">
    <property type="term" value="F:DNA binding"/>
    <property type="evidence" value="ECO:0007669"/>
    <property type="project" value="UniProtKB-UniRule"/>
</dbReference>
<dbReference type="GO" id="GO:0003899">
    <property type="term" value="F:DNA-directed RNA polymerase activity"/>
    <property type="evidence" value="ECO:0007669"/>
    <property type="project" value="UniProtKB-UniRule"/>
</dbReference>
<dbReference type="GO" id="GO:0032549">
    <property type="term" value="F:ribonucleoside binding"/>
    <property type="evidence" value="ECO:0007669"/>
    <property type="project" value="InterPro"/>
</dbReference>
<dbReference type="GO" id="GO:0006351">
    <property type="term" value="P:DNA-templated transcription"/>
    <property type="evidence" value="ECO:0007669"/>
    <property type="project" value="UniProtKB-UniRule"/>
</dbReference>
<dbReference type="CDD" id="cd00653">
    <property type="entry name" value="RNA_pol_B_RPB2"/>
    <property type="match status" value="1"/>
</dbReference>
<dbReference type="Gene3D" id="2.40.50.100">
    <property type="match status" value="1"/>
</dbReference>
<dbReference type="Gene3D" id="2.40.50.150">
    <property type="match status" value="1"/>
</dbReference>
<dbReference type="Gene3D" id="3.90.1100.10">
    <property type="match status" value="2"/>
</dbReference>
<dbReference type="Gene3D" id="2.30.150.10">
    <property type="entry name" value="DNA-directed RNA polymerase, beta subunit, external 1 domain"/>
    <property type="match status" value="1"/>
</dbReference>
<dbReference type="Gene3D" id="2.40.270.10">
    <property type="entry name" value="DNA-directed RNA polymerase, subunit 2, domain 6"/>
    <property type="match status" value="2"/>
</dbReference>
<dbReference type="Gene3D" id="3.90.1800.10">
    <property type="entry name" value="RNA polymerase alpha subunit dimerisation domain"/>
    <property type="match status" value="1"/>
</dbReference>
<dbReference type="Gene3D" id="3.90.1110.10">
    <property type="entry name" value="RNA polymerase Rpb2, domain 2"/>
    <property type="match status" value="2"/>
</dbReference>
<dbReference type="HAMAP" id="MF_01321">
    <property type="entry name" value="RNApol_bact_RpoB"/>
    <property type="match status" value="1"/>
</dbReference>
<dbReference type="InterPro" id="IPR042107">
    <property type="entry name" value="DNA-dir_RNA_pol_bsu_ext_1_sf"/>
</dbReference>
<dbReference type="InterPro" id="IPR019462">
    <property type="entry name" value="DNA-dir_RNA_pol_bsu_external_1"/>
</dbReference>
<dbReference type="InterPro" id="IPR015712">
    <property type="entry name" value="DNA-dir_RNA_pol_su2"/>
</dbReference>
<dbReference type="InterPro" id="IPR007120">
    <property type="entry name" value="DNA-dir_RNAP_su2_dom"/>
</dbReference>
<dbReference type="InterPro" id="IPR037033">
    <property type="entry name" value="DNA-dir_RNAP_su2_hyb_sf"/>
</dbReference>
<dbReference type="InterPro" id="IPR010243">
    <property type="entry name" value="RNA_pol_bsu_bac"/>
</dbReference>
<dbReference type="InterPro" id="IPR007121">
    <property type="entry name" value="RNA_pol_bsu_CS"/>
</dbReference>
<dbReference type="InterPro" id="IPR007644">
    <property type="entry name" value="RNA_pol_bsu_protrusion"/>
</dbReference>
<dbReference type="InterPro" id="IPR007642">
    <property type="entry name" value="RNA_pol_Rpb2_2"/>
</dbReference>
<dbReference type="InterPro" id="IPR037034">
    <property type="entry name" value="RNA_pol_Rpb2_2_sf"/>
</dbReference>
<dbReference type="InterPro" id="IPR007645">
    <property type="entry name" value="RNA_pol_Rpb2_3"/>
</dbReference>
<dbReference type="InterPro" id="IPR007641">
    <property type="entry name" value="RNA_pol_Rpb2_7"/>
</dbReference>
<dbReference type="InterPro" id="IPR014724">
    <property type="entry name" value="RNA_pol_RPB2_OB-fold"/>
</dbReference>
<dbReference type="NCBIfam" id="NF001616">
    <property type="entry name" value="PRK00405.1"/>
    <property type="match status" value="1"/>
</dbReference>
<dbReference type="NCBIfam" id="TIGR02013">
    <property type="entry name" value="rpoB"/>
    <property type="match status" value="1"/>
</dbReference>
<dbReference type="PANTHER" id="PTHR20856">
    <property type="entry name" value="DNA-DIRECTED RNA POLYMERASE I SUBUNIT 2"/>
    <property type="match status" value="1"/>
</dbReference>
<dbReference type="Pfam" id="PF04563">
    <property type="entry name" value="RNA_pol_Rpb2_1"/>
    <property type="match status" value="1"/>
</dbReference>
<dbReference type="Pfam" id="PF04561">
    <property type="entry name" value="RNA_pol_Rpb2_2"/>
    <property type="match status" value="2"/>
</dbReference>
<dbReference type="Pfam" id="PF04565">
    <property type="entry name" value="RNA_pol_Rpb2_3"/>
    <property type="match status" value="1"/>
</dbReference>
<dbReference type="Pfam" id="PF10385">
    <property type="entry name" value="RNA_pol_Rpb2_45"/>
    <property type="match status" value="1"/>
</dbReference>
<dbReference type="Pfam" id="PF00562">
    <property type="entry name" value="RNA_pol_Rpb2_6"/>
    <property type="match status" value="1"/>
</dbReference>
<dbReference type="Pfam" id="PF04560">
    <property type="entry name" value="RNA_pol_Rpb2_7"/>
    <property type="match status" value="1"/>
</dbReference>
<dbReference type="SUPFAM" id="SSF64484">
    <property type="entry name" value="beta and beta-prime subunits of DNA dependent RNA-polymerase"/>
    <property type="match status" value="1"/>
</dbReference>
<dbReference type="PROSITE" id="PS01166">
    <property type="entry name" value="RNA_POL_BETA"/>
    <property type="match status" value="1"/>
</dbReference>
<protein>
    <recommendedName>
        <fullName evidence="1">DNA-directed RNA polymerase subunit beta</fullName>
        <shortName evidence="1">RNAP subunit beta</shortName>
        <ecNumber evidence="1">2.7.7.6</ecNumber>
    </recommendedName>
    <alternativeName>
        <fullName evidence="1">RNA polymerase subunit beta</fullName>
    </alternativeName>
    <alternativeName>
        <fullName evidence="1">Transcriptase subunit beta</fullName>
    </alternativeName>
</protein>
<feature type="chain" id="PRO_0000329167" description="DNA-directed RNA polymerase subunit beta">
    <location>
        <begin position="1"/>
        <end position="1375"/>
    </location>
</feature>
<reference key="1">
    <citation type="journal article" date="2007" name="J. Bacteriol.">
        <title>The complete genome sequence of Campylobacter jejuni strain 81116 (NCTC11828).</title>
        <authorList>
            <person name="Pearson B.M."/>
            <person name="Gaskin D.J.H."/>
            <person name="Segers R.P.A.M."/>
            <person name="Wells J.M."/>
            <person name="Nuijten P.J.M."/>
            <person name="van Vliet A.H.M."/>
        </authorList>
    </citation>
    <scope>NUCLEOTIDE SEQUENCE [LARGE SCALE GENOMIC DNA]</scope>
    <source>
        <strain>81116 / NCTC 11828</strain>
    </source>
</reference>
<sequence length="1375" mass="155566">MLDNKLGNRLRVDFSNISKQIEIPNLLQLQKKSFDYFLNLDNGESGIEKVFKSIFPIHDPQNRLSLEYVSSEIGKPKYTIRECMERGLTYSVNLKMKIRLTLHEKDEKTGEKVGVKDIKEQEIYIREIPLMTDRVSFIINGVERVVVNQLHRSPGVIFKEEESSTVANKLVYTAQIIPDRGSWLYFEYDAKDVLYVRINKRRKVPVTMLFRALGYKKQDIIKLFYPIQTIHVKKDKFLTEFNPNDFMDRIEYDIKDEKGKIVHQAGKRLTKKKAEQLIKDGLKWIEYPVEILLNRYLANPIIDKESGEVLFDSLTLLDESKLAKIKEQKSFDIANDLANGVDAAIINSFAQDGETLKLLKQSENIDDENDLAAIRIYKVMRPGEPVVKDAAKAFVNDLFFNPERYDLTKVGRMKMNHKLGLEVPEYVTVLTNEDIIKTAKYLIKVKNGKGHIDDRDHLGNRRIRSIGELLANELHLGLAKMQKAIRDKFTSLNADLDKVMPYDLINPKMITTTIIEFFTGGQLSQFMDQTNPLSEVTHKRRLSALGEGGLVKERAGFEVRDVHATHYGRICPVETPEGQNIGLINTLSTYAKVNELGFVEAPYRKVVNGKVTNEVVYLTATQEEGLFIAPASTKVDAKGNIVEEFVEARQDGETILARREEVQLIDLCSGMVVGVAASLIPFLEHDDANRALMGSNMQRQAVPLLTASAPIVGTGMEQIIARDAWEAVKAKRGGVVEKVDNKSIFILGEDDKGPFIDHYTMEKNLRTNQNTNYIQHPIVKKGDIVKAGQIIADGPSMDQGELAIGKNALIAFMPWNGYNYEDAIVVSERIIREDTFTSVHIYEKEIEARELKDGIEEITKDIPNVKEEDVAHLDESGIAKIGTHIKPGMILVGKVSPKGEVKPTPEERLLRAIFGEKAGHVVNKSLYATASLEGVVVDVKIFTKKGYEKDDRAIKSYDKEKMALEKEHHDRLLMMDREEMLRVCALLSKAPLNSDQKIGDKNYKKGQTADISELEKINRFTLTTLIKAYSKEIQKEYDDLKNHFQNEKKKLKAEHDEKLEILEKDDILPSGVIKLVKVYIATKRKLKVGDKMAGRHGNKGIVSTIVPEVDMPYLPNGKSVDIALNPLGVPSRMNIGQILESHLGLIGLRLGDQIQEIFDRKQKDFLKELRAKMLEICSIPRLASEKEFIKSLSDEELLNYARDWSKGVKFATPVFEGVNIEEFSKLFEMAKIDMDGKTELYDGRTGEKIAERVHVGCMYMLKLHHLVDEKVHARSTGPYSLVTQQPVGGKALFGGQRFGEMEVWALEAYGAAHTLREMLTIKSDDVEGRFSAYKALTKGENVPATGIPETFFVLTNELKSLALDVEIFDKDEDNE</sequence>
<organism>
    <name type="scientific">Campylobacter jejuni subsp. jejuni serotype O:6 (strain 81116 / NCTC 11828)</name>
    <dbReference type="NCBI Taxonomy" id="407148"/>
    <lineage>
        <taxon>Bacteria</taxon>
        <taxon>Pseudomonadati</taxon>
        <taxon>Campylobacterota</taxon>
        <taxon>Epsilonproteobacteria</taxon>
        <taxon>Campylobacterales</taxon>
        <taxon>Campylobacteraceae</taxon>
        <taxon>Campylobacter</taxon>
    </lineage>
</organism>
<comment type="function">
    <text evidence="1">DNA-dependent RNA polymerase catalyzes the transcription of DNA into RNA using the four ribonucleoside triphosphates as substrates.</text>
</comment>
<comment type="catalytic activity">
    <reaction evidence="1">
        <text>RNA(n) + a ribonucleoside 5'-triphosphate = RNA(n+1) + diphosphate</text>
        <dbReference type="Rhea" id="RHEA:21248"/>
        <dbReference type="Rhea" id="RHEA-COMP:14527"/>
        <dbReference type="Rhea" id="RHEA-COMP:17342"/>
        <dbReference type="ChEBI" id="CHEBI:33019"/>
        <dbReference type="ChEBI" id="CHEBI:61557"/>
        <dbReference type="ChEBI" id="CHEBI:140395"/>
        <dbReference type="EC" id="2.7.7.6"/>
    </reaction>
</comment>
<comment type="subunit">
    <text evidence="1">The RNAP catalytic core consists of 2 alpha, 1 beta, 1 beta' and 1 omega subunit. When a sigma factor is associated with the core the holoenzyme is formed, which can initiate transcription.</text>
</comment>
<comment type="similarity">
    <text evidence="1">Belongs to the RNA polymerase beta chain family.</text>
</comment>